<proteinExistence type="evidence at protein level"/>
<gene>
    <name type="primary">rad50</name>
    <name type="ORF">CG6339</name>
</gene>
<dbReference type="EC" id="3.6.-.-" evidence="3"/>
<dbReference type="EMBL" id="AE013599">
    <property type="protein sequence ID" value="AAF46847.3"/>
    <property type="molecule type" value="Genomic_DNA"/>
</dbReference>
<dbReference type="EMBL" id="BT003555">
    <property type="protein sequence ID" value="AAO39559.1"/>
    <property type="status" value="ALT_INIT"/>
    <property type="molecule type" value="mRNA"/>
</dbReference>
<dbReference type="EMBL" id="FJ219324">
    <property type="protein sequence ID" value="ACI97309.1"/>
    <property type="molecule type" value="Genomic_DNA"/>
</dbReference>
<dbReference type="EMBL" id="FJ219329">
    <property type="protein sequence ID" value="ACI97314.1"/>
    <property type="molecule type" value="Genomic_DNA"/>
</dbReference>
<dbReference type="EMBL" id="FJ219330">
    <property type="protein sequence ID" value="ACI97315.1"/>
    <property type="molecule type" value="Genomic_DNA"/>
</dbReference>
<dbReference type="EMBL" id="FJ219331">
    <property type="protein sequence ID" value="ACI97316.1"/>
    <property type="molecule type" value="Genomic_DNA"/>
</dbReference>
<dbReference type="EMBL" id="FJ219332">
    <property type="protein sequence ID" value="ACI97317.1"/>
    <property type="molecule type" value="Genomic_DNA"/>
</dbReference>
<dbReference type="EMBL" id="FJ219333">
    <property type="protein sequence ID" value="ACI97318.1"/>
    <property type="molecule type" value="Genomic_DNA"/>
</dbReference>
<dbReference type="EMBL" id="FJ219334">
    <property type="protein sequence ID" value="ACI97319.1"/>
    <property type="molecule type" value="Genomic_DNA"/>
</dbReference>
<dbReference type="EMBL" id="FJ219335">
    <property type="protein sequence ID" value="ACI97320.1"/>
    <property type="molecule type" value="Genomic_DNA"/>
</dbReference>
<dbReference type="EMBL" id="FJ219336">
    <property type="protein sequence ID" value="ACI97321.1"/>
    <property type="molecule type" value="Genomic_DNA"/>
</dbReference>
<dbReference type="EMBL" id="FJ219337">
    <property type="protein sequence ID" value="ACI97322.1"/>
    <property type="molecule type" value="Genomic_DNA"/>
</dbReference>
<dbReference type="EMBL" id="FJ219338">
    <property type="protein sequence ID" value="ACI97323.1"/>
    <property type="molecule type" value="Genomic_DNA"/>
</dbReference>
<dbReference type="EMBL" id="FJ219339">
    <property type="protein sequence ID" value="ACI97324.1"/>
    <property type="molecule type" value="Genomic_DNA"/>
</dbReference>
<dbReference type="EMBL" id="FJ219340">
    <property type="protein sequence ID" value="ACI97325.1"/>
    <property type="molecule type" value="Genomic_DNA"/>
</dbReference>
<dbReference type="EMBL" id="FJ219341">
    <property type="protein sequence ID" value="ACI97326.1"/>
    <property type="molecule type" value="Genomic_DNA"/>
</dbReference>
<dbReference type="EMBL" id="FJ219342">
    <property type="protein sequence ID" value="ACI97327.1"/>
    <property type="molecule type" value="Genomic_DNA"/>
</dbReference>
<dbReference type="EMBL" id="FJ219343">
    <property type="protein sequence ID" value="ACI97328.1"/>
    <property type="molecule type" value="Genomic_DNA"/>
</dbReference>
<dbReference type="EMBL" id="FJ219344">
    <property type="protein sequence ID" value="ACI97329.1"/>
    <property type="molecule type" value="Genomic_DNA"/>
</dbReference>
<dbReference type="EMBL" id="FJ219345">
    <property type="protein sequence ID" value="ACI97330.1"/>
    <property type="molecule type" value="Genomic_DNA"/>
</dbReference>
<dbReference type="EMBL" id="FJ219346">
    <property type="protein sequence ID" value="ACI97331.1"/>
    <property type="molecule type" value="Genomic_DNA"/>
</dbReference>
<dbReference type="EMBL" id="FJ219347">
    <property type="protein sequence ID" value="ACI97332.1"/>
    <property type="molecule type" value="Genomic_DNA"/>
</dbReference>
<dbReference type="EMBL" id="FJ219348">
    <property type="protein sequence ID" value="ACI97333.1"/>
    <property type="molecule type" value="Genomic_DNA"/>
</dbReference>
<dbReference type="EMBL" id="FJ219349">
    <property type="protein sequence ID" value="ACI97334.1"/>
    <property type="molecule type" value="Genomic_DNA"/>
</dbReference>
<dbReference type="EMBL" id="FJ219350">
    <property type="protein sequence ID" value="ACI97335.1"/>
    <property type="molecule type" value="Genomic_DNA"/>
</dbReference>
<dbReference type="EMBL" id="AY052106">
    <property type="protein sequence ID" value="AAK93530.1"/>
    <property type="status" value="ALT_INIT"/>
    <property type="molecule type" value="mRNA"/>
</dbReference>
<dbReference type="RefSeq" id="NP_726199.3">
    <property type="nucleotide sequence ID" value="NM_166533.4"/>
</dbReference>
<dbReference type="SMR" id="Q9W252"/>
<dbReference type="BioGRID" id="63180">
    <property type="interactions" value="18"/>
</dbReference>
<dbReference type="ComplexPortal" id="CPX-10201">
    <property type="entry name" value="MRN double-strand break repair complex"/>
</dbReference>
<dbReference type="FunCoup" id="Q9W252">
    <property type="interactions" value="2298"/>
</dbReference>
<dbReference type="IntAct" id="Q9W252">
    <property type="interactions" value="11"/>
</dbReference>
<dbReference type="STRING" id="7227.FBpp0290882"/>
<dbReference type="PaxDb" id="7227-FBpp0290882"/>
<dbReference type="DNASU" id="37564"/>
<dbReference type="EnsemblMetazoa" id="FBtr0301668">
    <property type="protein sequence ID" value="FBpp0290882"/>
    <property type="gene ID" value="FBgn0034728"/>
</dbReference>
<dbReference type="GeneID" id="37564"/>
<dbReference type="KEGG" id="dme:Dmel_CG6339"/>
<dbReference type="UCSC" id="CG6339-RB">
    <property type="organism name" value="d. melanogaster"/>
</dbReference>
<dbReference type="AGR" id="FB:FBgn0034728"/>
<dbReference type="CTD" id="10111"/>
<dbReference type="FlyBase" id="FBgn0034728">
    <property type="gene designation" value="rad50"/>
</dbReference>
<dbReference type="VEuPathDB" id="VectorBase:FBgn0034728"/>
<dbReference type="eggNOG" id="KOG0962">
    <property type="taxonomic scope" value="Eukaryota"/>
</dbReference>
<dbReference type="GeneTree" id="ENSGT00390000018781"/>
<dbReference type="InParanoid" id="Q9W252"/>
<dbReference type="OMA" id="FSDYYYR"/>
<dbReference type="OrthoDB" id="18797at2759"/>
<dbReference type="PhylomeDB" id="Q9W252"/>
<dbReference type="Reactome" id="R-DME-2559586">
    <property type="pathway name" value="DNA Damage/Telomere Stress Induced Senescence"/>
</dbReference>
<dbReference type="Reactome" id="R-DME-5685939">
    <property type="pathway name" value="HDR through MMEJ (alt-NHEJ)"/>
</dbReference>
<dbReference type="Reactome" id="R-DME-5693548">
    <property type="pathway name" value="Sensing of DNA Double Strand Breaks"/>
</dbReference>
<dbReference type="Reactome" id="R-DME-5693565">
    <property type="pathway name" value="Recruitment and ATM-mediated phosphorylation of repair and signaling proteins at DNA double strand breaks"/>
</dbReference>
<dbReference type="Reactome" id="R-DME-5693607">
    <property type="pathway name" value="Processing of DNA double-strand break ends"/>
</dbReference>
<dbReference type="Reactome" id="R-DME-6804756">
    <property type="pathway name" value="Regulation of TP53 Activity through Phosphorylation"/>
</dbReference>
<dbReference type="Reactome" id="R-DME-69473">
    <property type="pathway name" value="G2/M DNA damage checkpoint"/>
</dbReference>
<dbReference type="SignaLink" id="Q9W252"/>
<dbReference type="BioGRID-ORCS" id="37564">
    <property type="hits" value="1 hit in 1 CRISPR screen"/>
</dbReference>
<dbReference type="GenomeRNAi" id="37564"/>
<dbReference type="PRO" id="PR:Q9W252"/>
<dbReference type="Proteomes" id="UP000000803">
    <property type="component" value="Chromosome 2R"/>
</dbReference>
<dbReference type="Bgee" id="FBgn0034728">
    <property type="expression patterns" value="Expressed in adult tracheocyte (Drosophila) in open tracheal system trachea and 153 other cell types or tissues"/>
</dbReference>
<dbReference type="ExpressionAtlas" id="Q9W252">
    <property type="expression patterns" value="baseline and differential"/>
</dbReference>
<dbReference type="GO" id="GO:0000781">
    <property type="term" value="C:chromosome, telomeric region"/>
    <property type="evidence" value="ECO:0007669"/>
    <property type="project" value="UniProtKB-SubCell"/>
</dbReference>
<dbReference type="GO" id="GO:0000793">
    <property type="term" value="C:condensed chromosome"/>
    <property type="evidence" value="ECO:0000314"/>
    <property type="project" value="UniProtKB"/>
</dbReference>
<dbReference type="GO" id="GO:0000794">
    <property type="term" value="C:condensed nuclear chromosome"/>
    <property type="evidence" value="ECO:0000318"/>
    <property type="project" value="GO_Central"/>
</dbReference>
<dbReference type="GO" id="GO:0030870">
    <property type="term" value="C:Mre11 complex"/>
    <property type="evidence" value="ECO:0000314"/>
    <property type="project" value="FlyBase"/>
</dbReference>
<dbReference type="GO" id="GO:0005634">
    <property type="term" value="C:nucleus"/>
    <property type="evidence" value="ECO:0000315"/>
    <property type="project" value="FlyBase"/>
</dbReference>
<dbReference type="GO" id="GO:0005524">
    <property type="term" value="F:ATP binding"/>
    <property type="evidence" value="ECO:0007669"/>
    <property type="project" value="UniProtKB-KW"/>
</dbReference>
<dbReference type="GO" id="GO:0016887">
    <property type="term" value="F:ATP hydrolysis activity"/>
    <property type="evidence" value="ECO:0007669"/>
    <property type="project" value="InterPro"/>
</dbReference>
<dbReference type="GO" id="GO:0003690">
    <property type="term" value="F:double-stranded DNA binding"/>
    <property type="evidence" value="ECO:0000250"/>
    <property type="project" value="UniProtKB"/>
</dbReference>
<dbReference type="GO" id="GO:0003691">
    <property type="term" value="F:double-stranded telomeric DNA binding"/>
    <property type="evidence" value="ECO:0000318"/>
    <property type="project" value="GO_Central"/>
</dbReference>
<dbReference type="GO" id="GO:0051880">
    <property type="term" value="F:G-quadruplex DNA binding"/>
    <property type="evidence" value="ECO:0000318"/>
    <property type="project" value="GO_Central"/>
</dbReference>
<dbReference type="GO" id="GO:0046872">
    <property type="term" value="F:metal ion binding"/>
    <property type="evidence" value="ECO:0007669"/>
    <property type="project" value="UniProtKB-KW"/>
</dbReference>
<dbReference type="GO" id="GO:0043047">
    <property type="term" value="F:single-stranded telomeric DNA binding"/>
    <property type="evidence" value="ECO:0000318"/>
    <property type="project" value="GO_Central"/>
</dbReference>
<dbReference type="GO" id="GO:0051276">
    <property type="term" value="P:chromosome organization"/>
    <property type="evidence" value="ECO:0000315"/>
    <property type="project" value="FlyBase"/>
</dbReference>
<dbReference type="GO" id="GO:0070192">
    <property type="term" value="P:chromosome organization involved in meiotic cell cycle"/>
    <property type="evidence" value="ECO:0000318"/>
    <property type="project" value="GO_Central"/>
</dbReference>
<dbReference type="GO" id="GO:0006281">
    <property type="term" value="P:DNA repair"/>
    <property type="evidence" value="ECO:0000315"/>
    <property type="project" value="FlyBase"/>
</dbReference>
<dbReference type="GO" id="GO:0006302">
    <property type="term" value="P:double-strand break repair"/>
    <property type="evidence" value="ECO:0000315"/>
    <property type="project" value="UniProtKB"/>
</dbReference>
<dbReference type="GO" id="GO:0008104">
    <property type="term" value="P:protein localization"/>
    <property type="evidence" value="ECO:0000315"/>
    <property type="project" value="UniProtKB"/>
</dbReference>
<dbReference type="GO" id="GO:0000723">
    <property type="term" value="P:telomere maintenance"/>
    <property type="evidence" value="ECO:0000315"/>
    <property type="project" value="CACAO"/>
</dbReference>
<dbReference type="GO" id="GO:0000722">
    <property type="term" value="P:telomere maintenance via recombination"/>
    <property type="evidence" value="ECO:0000315"/>
    <property type="project" value="UniProtKB"/>
</dbReference>
<dbReference type="GO" id="GO:0007004">
    <property type="term" value="P:telomere maintenance via telomerase"/>
    <property type="evidence" value="ECO:0000318"/>
    <property type="project" value="GO_Central"/>
</dbReference>
<dbReference type="FunFam" id="3.40.50.300:FF:000593">
    <property type="entry name" value="DNA repair protein RAD50"/>
    <property type="match status" value="1"/>
</dbReference>
<dbReference type="FunFam" id="3.40.50.300:FF:003359">
    <property type="entry name" value="Rad50, isoform E"/>
    <property type="match status" value="1"/>
</dbReference>
<dbReference type="Gene3D" id="3.40.50.300">
    <property type="entry name" value="P-loop containing nucleotide triphosphate hydrolases"/>
    <property type="match status" value="2"/>
</dbReference>
<dbReference type="InterPro" id="IPR027417">
    <property type="entry name" value="P-loop_NTPase"/>
</dbReference>
<dbReference type="InterPro" id="IPR038729">
    <property type="entry name" value="Rad50/SbcC_AAA"/>
</dbReference>
<dbReference type="InterPro" id="IPR004584">
    <property type="entry name" value="Rad50_eukaryotes"/>
</dbReference>
<dbReference type="InterPro" id="IPR013134">
    <property type="entry name" value="Zn_hook_RAD50"/>
</dbReference>
<dbReference type="NCBIfam" id="TIGR00606">
    <property type="entry name" value="rad50"/>
    <property type="match status" value="1"/>
</dbReference>
<dbReference type="PANTHER" id="PTHR18867:SF12">
    <property type="entry name" value="DNA REPAIR PROTEIN RAD50"/>
    <property type="match status" value="1"/>
</dbReference>
<dbReference type="PANTHER" id="PTHR18867">
    <property type="entry name" value="RAD50"/>
    <property type="match status" value="1"/>
</dbReference>
<dbReference type="Pfam" id="PF13476">
    <property type="entry name" value="AAA_23"/>
    <property type="match status" value="1"/>
</dbReference>
<dbReference type="Pfam" id="PF04423">
    <property type="entry name" value="Rad50_zn_hook"/>
    <property type="match status" value="1"/>
</dbReference>
<dbReference type="Pfam" id="PF13558">
    <property type="entry name" value="SbcC_Walker_B"/>
    <property type="match status" value="1"/>
</dbReference>
<dbReference type="SUPFAM" id="SSF52540">
    <property type="entry name" value="P-loop containing nucleoside triphosphate hydrolases"/>
    <property type="match status" value="3"/>
</dbReference>
<dbReference type="SUPFAM" id="SSF75712">
    <property type="entry name" value="Rad50 coiled-coil Zn hook"/>
    <property type="match status" value="1"/>
</dbReference>
<dbReference type="PROSITE" id="PS51131">
    <property type="entry name" value="ZN_HOOK"/>
    <property type="match status" value="1"/>
</dbReference>
<sequence length="1318" mass="152160">MSSIESLSIQGIRSFGTYADDLQSIKFSSPVTLILGENGCGKTTVVECLKYALTGECPPGSDRGKSFVHDPKIFGLNEVLAQIKMQVRDRRGAQVSICRTMKVSKKRNKMSFETMDSTINFLTGAGQSKREKQDSLSGRSVDIDVAISDFMGVSKAIINNVLFCHQEDSSWPLDESKKLKEKFDAIFGITEYNKALDKIIKLRKEAMEELKIKEANIKHVAYLKQEMEVKTLNLQKAQRKCDAIKAQCSECEEEMKPIEARLVEIRNVEFEIGKYQAQKVEMDTKHKNCKDQISTLTLKIKKPFRGTLDELDQEISNFDQRMLEMRQKRTEVEGDLSQIKRSSVAEQEKLGTQDRKHCLAKQRHQSELACRAQLLKRVKEFCRELHIPIDCDLVEQPEKMGEVLRDIEAMIITKHCEITEIVEQNEKADRSRQVKIDELRIELTKSEQSVTAQEKQRESSKRESETLGVEIKKIETSMQDLKKLEKEINEVNELYESATKNIDQQAIKDAIARKKASIAENQIQFKKLDEQLTFLGSMAKLVAECSLKQKELDKKNQEVHRVRSRHSDHFGKLFKEPITCNYRRSMQVVYEKLRREIQELNEKANTQKLKEQSYEIKRKNLISDISRMEKELKDSEELIYQKCRSTPYDDLLERSKTTISKLQFDHGALKSSEALYKKYIQKMDEEPSCPLCHHNMTSDEACDLTSELTDEIQKLPDNITRAEKALKAEQIKYENLLQLKPTILKVKELKDSLPQKKEELKKVEELLGDSVSEYETLIALIGEPTHNMELANSMMGDMSLLDEALKDSARLTKDLDLQKGQLPASYDSSVSMDDLQAEKSKVSKELETERKELESAQNAVQQQMDALNRLREKKNSLKDRQIHLREGLQSLPQLKERLEKLNSFLTTVASEISELKAKIQPLKLNLRAAIEEKERLKKSESEKLAQLNSKYNSYKSTDHDIQRLNKEAEDYAKLDLRNEIKKLDEIIMASKDKLRKLEAEISLKTDELETIKTECSNQQTVERDLKDNRELKQLEDKEAKLRESCQVLDKQLGNLDFHSVSKEKVNLTKQRDKATVRKGELLGQLGEIHSQVNKLQREIDEPRFKESLKNFRKANYEIEVTRLCIEDLGQYRLALEWALIQFHSEKMEMINRLIREYWRKIYRGNDIDYIQVKTDEVSSDASADRRKTYNYRVVQSKNYSEIEMRGRCSAGQRVLASLIIRLALAETFSSNCGVLALDEPTTNLDRANINSLCEALNCIVEERQSQSNFMLIIITHDENFVSSLGKITSYHRVFRNEECKSVIRRVEAGPSKKALIDQ</sequence>
<accession>Q9W252</accession>
<accession>B6UXS6</accession>
<accession>B6UXT1</accession>
<accession>B6UXT2</accession>
<accession>B6UXT3</accession>
<accession>B6UXT4</accession>
<accession>B6UXT5</accession>
<accession>B6UXT6</accession>
<accession>B6UXT7</accession>
<accession>B6UXT8</accession>
<accession>B6UXT9</accession>
<accession>B6UXU1</accession>
<accession>B6UXU2</accession>
<accession>B6UXU3</accession>
<accession>B6UXU4</accession>
<accession>B6UXU5</accession>
<accession>B6UXU6</accession>
<accession>B6UXU7</accession>
<accession>B6UXU8</accession>
<accession>B6UXU9</accession>
<accession>B6UXV0</accession>
<accession>B6UXV1</accession>
<accession>B6UXV2</accession>
<accession>Q86NZ9</accession>
<accession>Q960E0</accession>
<keyword id="KW-0067">ATP-binding</keyword>
<keyword id="KW-0131">Cell cycle</keyword>
<keyword id="KW-0158">Chromosome</keyword>
<keyword id="KW-0175">Coiled coil</keyword>
<keyword id="KW-0227">DNA damage</keyword>
<keyword id="KW-0234">DNA repair</keyword>
<keyword id="KW-0378">Hydrolase</keyword>
<keyword id="KW-0460">Magnesium</keyword>
<keyword id="KW-0469">Meiosis</keyword>
<keyword id="KW-0479">Metal-binding</keyword>
<keyword id="KW-0547">Nucleotide-binding</keyword>
<keyword id="KW-0539">Nucleus</keyword>
<keyword id="KW-1185">Reference proteome</keyword>
<keyword id="KW-0779">Telomere</keyword>
<keyword id="KW-0862">Zinc</keyword>
<comment type="function">
    <text evidence="1 3 7 8">Component of the MRN complex, which plays a central role in double-strand break (DSB) repair, DNA recombination, maintenance of telomere integrity and meiosis (PubMed:15135728, PubMed:15296753). The MRN complex is involved in the repair of DNA double-strand breaks (DSBs) via homologous recombination (HR), an error-free mechanism which primarily occurs during S and G2 phases (By similarity). The complex (1) mediates the end resection of damaged DNA, which generates proper single-stranded DNA, a key initial steps in HR, and is (2) required for the recruitment of other repair factors and efficient activation of ATM and ATR upon DNA damage (By similarity). The MRN complex possesses single-strand endonuclease activity and double-strand-specific 3'-5' exonuclease activity, which are provided by MRE11, to initiate end resection, which is required for single-strand invasion and recombination (By similarity). Within the complex, RAD50 is both required to bind DNA ends and hold them in close proximity and regulate the activity of MRE11 (By similarity). RAD50 provides an ATP-dependent control of MRE11 by positioning DNA ends into the MRE11 active site: ATP-binding induces a large structural change from an open form with accessible MRE11 nuclease sites into a closed form (By similarity).</text>
</comment>
<comment type="catalytic activity">
    <reaction evidence="1">
        <text>ATP + H2O = ADP + phosphate + H(+)</text>
        <dbReference type="Rhea" id="RHEA:13065"/>
        <dbReference type="ChEBI" id="CHEBI:15377"/>
        <dbReference type="ChEBI" id="CHEBI:15378"/>
        <dbReference type="ChEBI" id="CHEBI:30616"/>
        <dbReference type="ChEBI" id="CHEBI:43474"/>
        <dbReference type="ChEBI" id="CHEBI:456216"/>
    </reaction>
</comment>
<comment type="cofactor">
    <cofactor evidence="1">
        <name>Zn(2+)</name>
        <dbReference type="ChEBI" id="CHEBI:29105"/>
    </cofactor>
    <text evidence="1">Binds 1 zinc ion per homodimer.</text>
</comment>
<comment type="subunit">
    <text evidence="1">Component of the MRN complex composed of two heterodimers RAD50 and MRE11 associated with a single NBS1.</text>
</comment>
<comment type="interaction">
    <interactant intactId="EBI-145564">
        <id>Q9W252</id>
    </interactant>
    <interactant intactId="EBI-110666">
        <id>Q9XYZ4</id>
        <label>mre11</label>
    </interactant>
    <organismsDiffer>false</organismsDiffer>
    <experiments>5</experiments>
</comment>
<comment type="subcellular location">
    <subcellularLocation>
        <location evidence="8">Nucleus</location>
    </subcellularLocation>
    <subcellularLocation>
        <location evidence="8">Chromosome</location>
    </subcellularLocation>
    <subcellularLocation>
        <location evidence="8">Chromosome</location>
        <location evidence="8">Telomere</location>
    </subcellularLocation>
    <text evidence="3">Localizes to DNA double-strand breaks (DSBs).</text>
</comment>
<comment type="domain">
    <text evidence="2">The zinc-hook, which separates the large intramolecular coiled coil regions, contains 2 Cys residues that coordinate one molecule of zinc with the help of the 2 Cys residues of the zinc-hook of another RAD50 molecule, thereby forming a V-shaped homodimer. The two heads of the homodimer, which constitute the ATP-binding domain, interact with the MRE11 homodimer.</text>
</comment>
<comment type="disruption phenotype">
    <text evidence="7">Death during pupal stage, possibly due to the accumulation of DNA DSBs and the induction of apoptosis in third instar larvae.</text>
</comment>
<comment type="similarity">
    <text evidence="10">Belongs to the SMC family. RAD50 subfamily.</text>
</comment>
<comment type="sequence caution" evidence="10">
    <conflict type="erroneous initiation">
        <sequence resource="EMBL-CDS" id="AAK93530"/>
    </conflict>
    <text>Truncated N-terminus.</text>
</comment>
<comment type="sequence caution" evidence="10">
    <conflict type="erroneous initiation">
        <sequence resource="EMBL-CDS" id="AAO39559"/>
    </conflict>
    <text>Extended N-terminus.</text>
</comment>
<protein>
    <recommendedName>
        <fullName>DNA repair protein RAD50</fullName>
        <ecNumber evidence="3">3.6.-.-</ecNumber>
    </recommendedName>
</protein>
<name>RAD50_DROME</name>
<feature type="chain" id="PRO_0000138645" description="DNA repair protein RAD50">
    <location>
        <begin position="1"/>
        <end position="1318"/>
    </location>
</feature>
<feature type="domain" description="Zinc-hook" evidence="5">
    <location>
        <begin position="645"/>
        <end position="741"/>
    </location>
</feature>
<feature type="region of interest" description="Disordered" evidence="6">
    <location>
        <begin position="447"/>
        <end position="466"/>
    </location>
</feature>
<feature type="coiled-coil region" evidence="4">
    <location>
        <begin position="189"/>
        <end position="256"/>
    </location>
</feature>
<feature type="coiled-coil region" evidence="4">
    <location>
        <begin position="305"/>
        <end position="333"/>
    </location>
</feature>
<feature type="coiled-coil region" evidence="4">
    <location>
        <begin position="434"/>
        <end position="641"/>
    </location>
</feature>
<feature type="coiled-coil region" evidence="4">
    <location>
        <begin position="645"/>
        <end position="685"/>
    </location>
</feature>
<feature type="coiled-coil region" evidence="4">
    <location>
        <begin position="713"/>
        <end position="741"/>
    </location>
</feature>
<feature type="coiled-coil region" evidence="4">
    <location>
        <begin position="830"/>
        <end position="1101"/>
    </location>
</feature>
<feature type="compositionally biased region" description="Basic and acidic residues" evidence="6">
    <location>
        <begin position="454"/>
        <end position="466"/>
    </location>
</feature>
<feature type="binding site" evidence="1">
    <location>
        <position position="13"/>
    </location>
    <ligand>
        <name>ATP</name>
        <dbReference type="ChEBI" id="CHEBI:30616"/>
    </ligand>
</feature>
<feature type="binding site" evidence="1">
    <location>
        <position position="38"/>
    </location>
    <ligand>
        <name>ATP</name>
        <dbReference type="ChEBI" id="CHEBI:30616"/>
    </ligand>
</feature>
<feature type="binding site" evidence="1">
    <location>
        <position position="39"/>
    </location>
    <ligand>
        <name>ATP</name>
        <dbReference type="ChEBI" id="CHEBI:30616"/>
    </ligand>
</feature>
<feature type="binding site" evidence="1">
    <location>
        <position position="41"/>
    </location>
    <ligand>
        <name>ATP</name>
        <dbReference type="ChEBI" id="CHEBI:30616"/>
    </ligand>
</feature>
<feature type="binding site" evidence="1">
    <location>
        <position position="42"/>
    </location>
    <ligand>
        <name>ATP</name>
        <dbReference type="ChEBI" id="CHEBI:30616"/>
    </ligand>
</feature>
<feature type="binding site" evidence="1">
    <location>
        <position position="43"/>
    </location>
    <ligand>
        <name>ATP</name>
        <dbReference type="ChEBI" id="CHEBI:30616"/>
    </ligand>
</feature>
<feature type="binding site" evidence="1">
    <location>
        <position position="43"/>
    </location>
    <ligand>
        <name>Mg(2+)</name>
        <dbReference type="ChEBI" id="CHEBI:18420"/>
    </ligand>
</feature>
<feature type="binding site" evidence="1">
    <location>
        <position position="44"/>
    </location>
    <ligand>
        <name>ATP</name>
        <dbReference type="ChEBI" id="CHEBI:30616"/>
    </ligand>
</feature>
<feature type="binding site" evidence="1">
    <location>
        <position position="68"/>
    </location>
    <ligand>
        <name>ATP</name>
        <dbReference type="ChEBI" id="CHEBI:30616"/>
    </ligand>
</feature>
<feature type="binding site" evidence="1">
    <location>
        <position position="70"/>
    </location>
    <ligand>
        <name>ATP</name>
        <dbReference type="ChEBI" id="CHEBI:30616"/>
    </ligand>
</feature>
<feature type="binding site" evidence="1">
    <location>
        <position position="166"/>
    </location>
    <ligand>
        <name>ATP</name>
        <dbReference type="ChEBI" id="CHEBI:30616"/>
    </ligand>
</feature>
<feature type="binding site" evidence="1">
    <location>
        <position position="166"/>
    </location>
    <ligand>
        <name>Mg(2+)</name>
        <dbReference type="ChEBI" id="CHEBI:18420"/>
    </ligand>
</feature>
<feature type="binding site" evidence="5">
    <location>
        <position position="689"/>
    </location>
    <ligand>
        <name>Zn(2+)</name>
        <dbReference type="ChEBI" id="CHEBI:29105"/>
    </ligand>
</feature>
<feature type="binding site" evidence="5">
    <location>
        <position position="692"/>
    </location>
    <ligand>
        <name>Zn(2+)</name>
        <dbReference type="ChEBI" id="CHEBI:29105"/>
    </ligand>
</feature>
<feature type="sequence variant" description="In strain: NC335, NC362 and NC390." evidence="9">
    <original>E</original>
    <variation>D</variation>
    <location>
        <position position="208"/>
    </location>
</feature>
<feature type="sequence variant" description="In strain: NC335, NC362 and NC390." evidence="9">
    <original>H</original>
    <variation>V</variation>
    <location>
        <position position="219"/>
    </location>
</feature>
<feature type="sequence variant" description="In strain: NC335, NC362 and NC390." evidence="9">
    <original>V</original>
    <variation>E</variation>
    <location>
        <position position="220"/>
    </location>
</feature>
<feature type="sequence variant" description="In strain: MW25." evidence="9">
    <original>A</original>
    <variation>E</variation>
    <location>
        <position position="246"/>
    </location>
</feature>
<feature type="sequence variant" description="In strain: MW25." evidence="9">
    <original>S</original>
    <variation>M</variation>
    <location>
        <position position="249"/>
    </location>
</feature>
<feature type="sequence variant" description="In strain: NC306." evidence="9">
    <original>E</original>
    <variation>Q</variation>
    <location>
        <position position="281"/>
    </location>
</feature>
<feature type="sequence variant" description="In strain: MW9." evidence="9">
    <original>K</original>
    <variation>T</variation>
    <location>
        <position position="349"/>
    </location>
</feature>
<feature type="sequence variant" description="In strain: NC361 and NC375." evidence="9">
    <original>V</original>
    <variation>E</variation>
    <location>
        <position position="422"/>
    </location>
</feature>
<feature type="sequence variant" description="In strain: MW6." evidence="9">
    <original>V</original>
    <variation>I</variation>
    <location>
        <position position="450"/>
    </location>
</feature>
<feature type="sequence variant" description="In strain: MW6." evidence="9">
    <original>D</original>
    <variation>N</variation>
    <location>
        <position position="480"/>
    </location>
</feature>
<feature type="sequence variant" description="In strain: MW25, MW27, MW56, MW9, NC303, NC306, NC335, NC336, NC390 and NC399." evidence="9">
    <original>E</original>
    <variation>Q</variation>
    <location>
        <position position="490"/>
    </location>
</feature>
<feature type="sequence variant" description="In strain: NC303, NC306 and NC335." evidence="9">
    <original>V</original>
    <variation>I</variation>
    <location>
        <position position="491"/>
    </location>
</feature>
<feature type="sequence variant" description="In strain: MW25." evidence="9">
    <original>C</original>
    <variation>S</variation>
    <location>
        <position position="580"/>
    </location>
</feature>
<feature type="sequence variant" description="In strain: MW25." evidence="9">
    <original>M</original>
    <variation>I</variation>
    <location>
        <position position="586"/>
    </location>
</feature>
<feature type="sequence variant" description="In strain: NC336, NC358, NC361, NC362 and NC375." evidence="9">
    <original>S</original>
    <variation>N</variation>
    <location>
        <position position="623"/>
    </location>
</feature>
<feature type="sequence variant" description="In strain: NC357 and NC397." evidence="9">
    <original>T</original>
    <variation>S</variation>
    <location>
        <position position="646"/>
    </location>
</feature>
<feature type="sequence variant" description="In strain: MW6, NC357, NC358, NC361, NC362, NC375 and NC397." evidence="9">
    <original>T</original>
    <variation>A</variation>
    <location>
        <position position="657"/>
    </location>
</feature>
<feature type="sequence conflict" description="In Ref. 5; AAK93530." evidence="10" ref="5">
    <original>R</original>
    <variation>K</variation>
    <location>
        <position position="880"/>
    </location>
</feature>
<feature type="sequence conflict" description="In Ref. 5; AAK93530." evidence="10" ref="5">
    <original>H</original>
    <variation>Q</variation>
    <location>
        <position position="959"/>
    </location>
</feature>
<reference key="1">
    <citation type="journal article" date="2000" name="Science">
        <title>The genome sequence of Drosophila melanogaster.</title>
        <authorList>
            <person name="Adams M.D."/>
            <person name="Celniker S.E."/>
            <person name="Holt R.A."/>
            <person name="Evans C.A."/>
            <person name="Gocayne J.D."/>
            <person name="Amanatides P.G."/>
            <person name="Scherer S.E."/>
            <person name="Li P.W."/>
            <person name="Hoskins R.A."/>
            <person name="Galle R.F."/>
            <person name="George R.A."/>
            <person name="Lewis S.E."/>
            <person name="Richards S."/>
            <person name="Ashburner M."/>
            <person name="Henderson S.N."/>
            <person name="Sutton G.G."/>
            <person name="Wortman J.R."/>
            <person name="Yandell M.D."/>
            <person name="Zhang Q."/>
            <person name="Chen L.X."/>
            <person name="Brandon R.C."/>
            <person name="Rogers Y.-H.C."/>
            <person name="Blazej R.G."/>
            <person name="Champe M."/>
            <person name="Pfeiffer B.D."/>
            <person name="Wan K.H."/>
            <person name="Doyle C."/>
            <person name="Baxter E.G."/>
            <person name="Helt G."/>
            <person name="Nelson C.R."/>
            <person name="Miklos G.L.G."/>
            <person name="Abril J.F."/>
            <person name="Agbayani A."/>
            <person name="An H.-J."/>
            <person name="Andrews-Pfannkoch C."/>
            <person name="Baldwin D."/>
            <person name="Ballew R.M."/>
            <person name="Basu A."/>
            <person name="Baxendale J."/>
            <person name="Bayraktaroglu L."/>
            <person name="Beasley E.M."/>
            <person name="Beeson K.Y."/>
            <person name="Benos P.V."/>
            <person name="Berman B.P."/>
            <person name="Bhandari D."/>
            <person name="Bolshakov S."/>
            <person name="Borkova D."/>
            <person name="Botchan M.R."/>
            <person name="Bouck J."/>
            <person name="Brokstein P."/>
            <person name="Brottier P."/>
            <person name="Burtis K.C."/>
            <person name="Busam D.A."/>
            <person name="Butler H."/>
            <person name="Cadieu E."/>
            <person name="Center A."/>
            <person name="Chandra I."/>
            <person name="Cherry J.M."/>
            <person name="Cawley S."/>
            <person name="Dahlke C."/>
            <person name="Davenport L.B."/>
            <person name="Davies P."/>
            <person name="de Pablos B."/>
            <person name="Delcher A."/>
            <person name="Deng Z."/>
            <person name="Mays A.D."/>
            <person name="Dew I."/>
            <person name="Dietz S.M."/>
            <person name="Dodson K."/>
            <person name="Doup L.E."/>
            <person name="Downes M."/>
            <person name="Dugan-Rocha S."/>
            <person name="Dunkov B.C."/>
            <person name="Dunn P."/>
            <person name="Durbin K.J."/>
            <person name="Evangelista C.C."/>
            <person name="Ferraz C."/>
            <person name="Ferriera S."/>
            <person name="Fleischmann W."/>
            <person name="Fosler C."/>
            <person name="Gabrielian A.E."/>
            <person name="Garg N.S."/>
            <person name="Gelbart W.M."/>
            <person name="Glasser K."/>
            <person name="Glodek A."/>
            <person name="Gong F."/>
            <person name="Gorrell J.H."/>
            <person name="Gu Z."/>
            <person name="Guan P."/>
            <person name="Harris M."/>
            <person name="Harris N.L."/>
            <person name="Harvey D.A."/>
            <person name="Heiman T.J."/>
            <person name="Hernandez J.R."/>
            <person name="Houck J."/>
            <person name="Hostin D."/>
            <person name="Houston K.A."/>
            <person name="Howland T.J."/>
            <person name="Wei M.-H."/>
            <person name="Ibegwam C."/>
            <person name="Jalali M."/>
            <person name="Kalush F."/>
            <person name="Karpen G.H."/>
            <person name="Ke Z."/>
            <person name="Kennison J.A."/>
            <person name="Ketchum K.A."/>
            <person name="Kimmel B.E."/>
            <person name="Kodira C.D."/>
            <person name="Kraft C.L."/>
            <person name="Kravitz S."/>
            <person name="Kulp D."/>
            <person name="Lai Z."/>
            <person name="Lasko P."/>
            <person name="Lei Y."/>
            <person name="Levitsky A.A."/>
            <person name="Li J.H."/>
            <person name="Li Z."/>
            <person name="Liang Y."/>
            <person name="Lin X."/>
            <person name="Liu X."/>
            <person name="Mattei B."/>
            <person name="McIntosh T.C."/>
            <person name="McLeod M.P."/>
            <person name="McPherson D."/>
            <person name="Merkulov G."/>
            <person name="Milshina N.V."/>
            <person name="Mobarry C."/>
            <person name="Morris J."/>
            <person name="Moshrefi A."/>
            <person name="Mount S.M."/>
            <person name="Moy M."/>
            <person name="Murphy B."/>
            <person name="Murphy L."/>
            <person name="Muzny D.M."/>
            <person name="Nelson D.L."/>
            <person name="Nelson D.R."/>
            <person name="Nelson K.A."/>
            <person name="Nixon K."/>
            <person name="Nusskern D.R."/>
            <person name="Pacleb J.M."/>
            <person name="Palazzolo M."/>
            <person name="Pittman G.S."/>
            <person name="Pan S."/>
            <person name="Pollard J."/>
            <person name="Puri V."/>
            <person name="Reese M.G."/>
            <person name="Reinert K."/>
            <person name="Remington K."/>
            <person name="Saunders R.D.C."/>
            <person name="Scheeler F."/>
            <person name="Shen H."/>
            <person name="Shue B.C."/>
            <person name="Siden-Kiamos I."/>
            <person name="Simpson M."/>
            <person name="Skupski M.P."/>
            <person name="Smith T.J."/>
            <person name="Spier E."/>
            <person name="Spradling A.C."/>
            <person name="Stapleton M."/>
            <person name="Strong R."/>
            <person name="Sun E."/>
            <person name="Svirskas R."/>
            <person name="Tector C."/>
            <person name="Turner R."/>
            <person name="Venter E."/>
            <person name="Wang A.H."/>
            <person name="Wang X."/>
            <person name="Wang Z.-Y."/>
            <person name="Wassarman D.A."/>
            <person name="Weinstock G.M."/>
            <person name="Weissenbach J."/>
            <person name="Williams S.M."/>
            <person name="Woodage T."/>
            <person name="Worley K.C."/>
            <person name="Wu D."/>
            <person name="Yang S."/>
            <person name="Yao Q.A."/>
            <person name="Ye J."/>
            <person name="Yeh R.-F."/>
            <person name="Zaveri J.S."/>
            <person name="Zhan M."/>
            <person name="Zhang G."/>
            <person name="Zhao Q."/>
            <person name="Zheng L."/>
            <person name="Zheng X.H."/>
            <person name="Zhong F.N."/>
            <person name="Zhong W."/>
            <person name="Zhou X."/>
            <person name="Zhu S.C."/>
            <person name="Zhu X."/>
            <person name="Smith H.O."/>
            <person name="Gibbs R.A."/>
            <person name="Myers E.W."/>
            <person name="Rubin G.M."/>
            <person name="Venter J.C."/>
        </authorList>
    </citation>
    <scope>NUCLEOTIDE SEQUENCE [LARGE SCALE GENOMIC DNA]</scope>
    <source>
        <strain>Berkeley</strain>
    </source>
</reference>
<reference key="2">
    <citation type="journal article" date="2002" name="Genome Biol.">
        <title>Annotation of the Drosophila melanogaster euchromatic genome: a systematic review.</title>
        <authorList>
            <person name="Misra S."/>
            <person name="Crosby M.A."/>
            <person name="Mungall C.J."/>
            <person name="Matthews B.B."/>
            <person name="Campbell K.S."/>
            <person name="Hradecky P."/>
            <person name="Huang Y."/>
            <person name="Kaminker J.S."/>
            <person name="Millburn G.H."/>
            <person name="Prochnik S.E."/>
            <person name="Smith C.D."/>
            <person name="Tupy J.L."/>
            <person name="Whitfield E.J."/>
            <person name="Bayraktaroglu L."/>
            <person name="Berman B.P."/>
            <person name="Bettencourt B.R."/>
            <person name="Celniker S.E."/>
            <person name="de Grey A.D.N.J."/>
            <person name="Drysdale R.A."/>
            <person name="Harris N.L."/>
            <person name="Richter J."/>
            <person name="Russo S."/>
            <person name="Schroeder A.J."/>
            <person name="Shu S.Q."/>
            <person name="Stapleton M."/>
            <person name="Yamada C."/>
            <person name="Ashburner M."/>
            <person name="Gelbart W.M."/>
            <person name="Rubin G.M."/>
            <person name="Lewis S.E."/>
        </authorList>
    </citation>
    <scope>GENOME REANNOTATION</scope>
    <source>
        <strain>Berkeley</strain>
    </source>
</reference>
<reference key="3">
    <citation type="submission" date="2003-02" db="EMBL/GenBank/DDBJ databases">
        <authorList>
            <person name="Stapleton M."/>
            <person name="Brokstein P."/>
            <person name="Hong L."/>
            <person name="Agbayani A."/>
            <person name="Carlson J.W."/>
            <person name="Champe M."/>
            <person name="Chavez C."/>
            <person name="Dorsett V."/>
            <person name="Dresnek D."/>
            <person name="Farfan D."/>
            <person name="Frise E."/>
            <person name="George R.A."/>
            <person name="Gonzalez M."/>
            <person name="Guarin H."/>
            <person name="Kronmiller B."/>
            <person name="Li P.W."/>
            <person name="Liao G."/>
            <person name="Miranda A."/>
            <person name="Mungall C.J."/>
            <person name="Nunoo J."/>
            <person name="Pacleb J.M."/>
            <person name="Paragas V."/>
            <person name="Park S."/>
            <person name="Patel S."/>
            <person name="Phouanenavong S."/>
            <person name="Wan K.H."/>
            <person name="Yu C."/>
            <person name="Lewis S.E."/>
            <person name="Rubin G.M."/>
            <person name="Celniker S.E."/>
        </authorList>
    </citation>
    <scope>NUCLEOTIDE SEQUENCE [LARGE SCALE MRNA]</scope>
    <source>
        <strain>Berkeley</strain>
        <tissue>Larva</tissue>
        <tissue>Pupae</tissue>
    </source>
</reference>
<reference key="4">
    <citation type="journal article" date="2009" name="Genetics">
        <title>Molecular population genetics and evolution of Drosophila meiosis genes.</title>
        <authorList>
            <person name="Anderson J.A."/>
            <person name="Gilliland W.D."/>
            <person name="Langley C.H."/>
        </authorList>
    </citation>
    <scope>NUCLEOTIDE SEQUENCE [GENOMIC DNA] OF 25-657</scope>
    <scope>VARIANTS ASP-208; VAL-219; GLU-220; GLU-246; MET-249; GLN-281; THR-349; GLU-422; ILE-450; ASN-480; GLN-490; ILE-491; SER-580; ILE-586; ASN-623; SER-646 AND ALA-657</scope>
    <source>
        <strain>MW11</strain>
        <strain>MW25</strain>
        <strain>MW27</strain>
        <strain>MW56</strain>
        <strain>MW6</strain>
        <strain>MW9</strain>
        <strain>NC301</strain>
        <strain>NC303</strain>
        <strain>NC304</strain>
        <strain>NC306</strain>
        <strain>NC322</strain>
        <strain>NC335</strain>
        <strain>NC336</strain>
        <strain>NC350</strain>
        <strain>NC357</strain>
        <strain>NC358</strain>
        <strain>NC359</strain>
        <strain>NC361</strain>
        <strain>NC362</strain>
        <strain>NC375</strain>
        <strain>NC390</strain>
        <strain>NC397</strain>
        <strain>NC399</strain>
    </source>
</reference>
<reference key="5">
    <citation type="journal article" date="2002" name="Genome Biol.">
        <title>A Drosophila full-length cDNA resource.</title>
        <authorList>
            <person name="Stapleton M."/>
            <person name="Carlson J.W."/>
            <person name="Brokstein P."/>
            <person name="Yu C."/>
            <person name="Champe M."/>
            <person name="George R.A."/>
            <person name="Guarin H."/>
            <person name="Kronmiller B."/>
            <person name="Pacleb J.M."/>
            <person name="Park S."/>
            <person name="Wan K.H."/>
            <person name="Rubin G.M."/>
            <person name="Celniker S.E."/>
        </authorList>
    </citation>
    <scope>NUCLEOTIDE SEQUENCE [LARGE SCALE MRNA] OF 500-1318</scope>
    <source>
        <strain>Berkeley</strain>
        <tissue>Embryo</tissue>
    </source>
</reference>
<reference key="6">
    <citation type="journal article" date="2004" name="Curr. Biol.">
        <title>The Drosophila Mre11/Rad50 complex is required to prevent both telomeric fusion and chromosome breakage.</title>
        <authorList>
            <person name="Ciapponi L."/>
            <person name="Cenci G."/>
            <person name="Ducau J."/>
            <person name="Flores C."/>
            <person name="Johnson-Schlitz D."/>
            <person name="Gorski M.M."/>
            <person name="Engels W.R."/>
            <person name="Gatti M."/>
        </authorList>
    </citation>
    <scope>FUNCTION</scope>
    <scope>SUBCELLULAR LOCATION</scope>
</reference>
<reference key="7">
    <citation type="journal article" date="2004" name="DNA Repair">
        <title>Disruption of Drosophila Rad50 causes pupal lethality, the accumulation of DNA double-strand breaks and the induction of apoptosis in third instar larvae.</title>
        <authorList>
            <person name="Gorski M.M."/>
            <person name="Romeijn R.J."/>
            <person name="Eeken J.C.J."/>
            <person name="de Jong A.W.M."/>
            <person name="van Veen B.L."/>
            <person name="Szuhai K."/>
            <person name="Mullenders L.H."/>
            <person name="Ferro W."/>
            <person name="Pastink A."/>
        </authorList>
    </citation>
    <scope>FUNCTION</scope>
    <scope>DISRUPTION PHENOTYPE</scope>
</reference>
<organism>
    <name type="scientific">Drosophila melanogaster</name>
    <name type="common">Fruit fly</name>
    <dbReference type="NCBI Taxonomy" id="7227"/>
    <lineage>
        <taxon>Eukaryota</taxon>
        <taxon>Metazoa</taxon>
        <taxon>Ecdysozoa</taxon>
        <taxon>Arthropoda</taxon>
        <taxon>Hexapoda</taxon>
        <taxon>Insecta</taxon>
        <taxon>Pterygota</taxon>
        <taxon>Neoptera</taxon>
        <taxon>Endopterygota</taxon>
        <taxon>Diptera</taxon>
        <taxon>Brachycera</taxon>
        <taxon>Muscomorpha</taxon>
        <taxon>Ephydroidea</taxon>
        <taxon>Drosophilidae</taxon>
        <taxon>Drosophila</taxon>
        <taxon>Sophophora</taxon>
    </lineage>
</organism>
<evidence type="ECO:0000250" key="1">
    <source>
        <dbReference type="UniProtKB" id="G0SHW7"/>
    </source>
</evidence>
<evidence type="ECO:0000250" key="2">
    <source>
        <dbReference type="UniProtKB" id="P58301"/>
    </source>
</evidence>
<evidence type="ECO:0000250" key="3">
    <source>
        <dbReference type="UniProtKB" id="Q92878"/>
    </source>
</evidence>
<evidence type="ECO:0000255" key="4"/>
<evidence type="ECO:0000255" key="5">
    <source>
        <dbReference type="PROSITE-ProRule" id="PRU00471"/>
    </source>
</evidence>
<evidence type="ECO:0000256" key="6">
    <source>
        <dbReference type="SAM" id="MobiDB-lite"/>
    </source>
</evidence>
<evidence type="ECO:0000269" key="7">
    <source>
    </source>
</evidence>
<evidence type="ECO:0000269" key="8">
    <source>
    </source>
</evidence>
<evidence type="ECO:0000269" key="9">
    <source>
    </source>
</evidence>
<evidence type="ECO:0000305" key="10"/>